<gene>
    <name evidence="1" type="primary">rpoZ</name>
    <name type="ordered locus">Bcep18194_A4108</name>
</gene>
<proteinExistence type="inferred from homology"/>
<evidence type="ECO:0000255" key="1">
    <source>
        <dbReference type="HAMAP-Rule" id="MF_00366"/>
    </source>
</evidence>
<keyword id="KW-0240">DNA-directed RNA polymerase</keyword>
<keyword id="KW-0548">Nucleotidyltransferase</keyword>
<keyword id="KW-0804">Transcription</keyword>
<keyword id="KW-0808">Transferase</keyword>
<protein>
    <recommendedName>
        <fullName evidence="1">DNA-directed RNA polymerase subunit omega</fullName>
        <shortName evidence="1">RNAP omega subunit</shortName>
        <ecNumber evidence="1">2.7.7.6</ecNumber>
    </recommendedName>
    <alternativeName>
        <fullName evidence="1">RNA polymerase omega subunit</fullName>
    </alternativeName>
    <alternativeName>
        <fullName evidence="1">Transcriptase subunit omega</fullName>
    </alternativeName>
</protein>
<reference key="1">
    <citation type="submission" date="2005-10" db="EMBL/GenBank/DDBJ databases">
        <title>Complete sequence of chromosome 1 of Burkholderia sp. 383.</title>
        <authorList>
            <consortium name="US DOE Joint Genome Institute"/>
            <person name="Copeland A."/>
            <person name="Lucas S."/>
            <person name="Lapidus A."/>
            <person name="Barry K."/>
            <person name="Detter J.C."/>
            <person name="Glavina T."/>
            <person name="Hammon N."/>
            <person name="Israni S."/>
            <person name="Pitluck S."/>
            <person name="Chain P."/>
            <person name="Malfatti S."/>
            <person name="Shin M."/>
            <person name="Vergez L."/>
            <person name="Schmutz J."/>
            <person name="Larimer F."/>
            <person name="Land M."/>
            <person name="Kyrpides N."/>
            <person name="Lykidis A."/>
            <person name="Richardson P."/>
        </authorList>
    </citation>
    <scope>NUCLEOTIDE SEQUENCE [LARGE SCALE GENOMIC DNA]</scope>
    <source>
        <strain>ATCC 17760 / DSM 23089 / LMG 22485 / NCIMB 9086 / R18194 / 383</strain>
    </source>
</reference>
<feature type="chain" id="PRO_0000237445" description="DNA-directed RNA polymerase subunit omega">
    <location>
        <begin position="1"/>
        <end position="67"/>
    </location>
</feature>
<dbReference type="EC" id="2.7.7.6" evidence="1"/>
<dbReference type="EMBL" id="CP000151">
    <property type="protein sequence ID" value="ABB07705.1"/>
    <property type="molecule type" value="Genomic_DNA"/>
</dbReference>
<dbReference type="RefSeq" id="WP_006025620.1">
    <property type="nucleotide sequence ID" value="NZ_WNDV01000014.1"/>
</dbReference>
<dbReference type="SMR" id="Q39IL1"/>
<dbReference type="GeneID" id="98102617"/>
<dbReference type="KEGG" id="bur:Bcep18194_A4108"/>
<dbReference type="HOGENOM" id="CLU_125406_5_2_4"/>
<dbReference type="Proteomes" id="UP000002705">
    <property type="component" value="Chromosome 1"/>
</dbReference>
<dbReference type="GO" id="GO:0000428">
    <property type="term" value="C:DNA-directed RNA polymerase complex"/>
    <property type="evidence" value="ECO:0007669"/>
    <property type="project" value="UniProtKB-KW"/>
</dbReference>
<dbReference type="GO" id="GO:0003677">
    <property type="term" value="F:DNA binding"/>
    <property type="evidence" value="ECO:0007669"/>
    <property type="project" value="UniProtKB-UniRule"/>
</dbReference>
<dbReference type="GO" id="GO:0003899">
    <property type="term" value="F:DNA-directed RNA polymerase activity"/>
    <property type="evidence" value="ECO:0007669"/>
    <property type="project" value="UniProtKB-UniRule"/>
</dbReference>
<dbReference type="GO" id="GO:0006351">
    <property type="term" value="P:DNA-templated transcription"/>
    <property type="evidence" value="ECO:0007669"/>
    <property type="project" value="UniProtKB-UniRule"/>
</dbReference>
<dbReference type="Gene3D" id="3.90.940.10">
    <property type="match status" value="1"/>
</dbReference>
<dbReference type="HAMAP" id="MF_00366">
    <property type="entry name" value="RNApol_bact_RpoZ"/>
    <property type="match status" value="1"/>
</dbReference>
<dbReference type="InterPro" id="IPR003716">
    <property type="entry name" value="DNA-dir_RNA_pol_omega"/>
</dbReference>
<dbReference type="InterPro" id="IPR006110">
    <property type="entry name" value="Pol_omega/Rpo6/RPB6"/>
</dbReference>
<dbReference type="InterPro" id="IPR036161">
    <property type="entry name" value="RPB6/omega-like_sf"/>
</dbReference>
<dbReference type="NCBIfam" id="TIGR00690">
    <property type="entry name" value="rpoZ"/>
    <property type="match status" value="1"/>
</dbReference>
<dbReference type="PANTHER" id="PTHR34476">
    <property type="entry name" value="DNA-DIRECTED RNA POLYMERASE SUBUNIT OMEGA"/>
    <property type="match status" value="1"/>
</dbReference>
<dbReference type="PANTHER" id="PTHR34476:SF1">
    <property type="entry name" value="DNA-DIRECTED RNA POLYMERASE SUBUNIT OMEGA"/>
    <property type="match status" value="1"/>
</dbReference>
<dbReference type="Pfam" id="PF01192">
    <property type="entry name" value="RNA_pol_Rpb6"/>
    <property type="match status" value="1"/>
</dbReference>
<dbReference type="SMART" id="SM01409">
    <property type="entry name" value="RNA_pol_Rpb6"/>
    <property type="match status" value="1"/>
</dbReference>
<dbReference type="SUPFAM" id="SSF63562">
    <property type="entry name" value="RPB6/omega subunit-like"/>
    <property type="match status" value="1"/>
</dbReference>
<accession>Q39IL1</accession>
<name>RPOZ_BURL3</name>
<organism>
    <name type="scientific">Burkholderia lata (strain ATCC 17760 / DSM 23089 / LMG 22485 / NCIMB 9086 / R18194 / 383)</name>
    <dbReference type="NCBI Taxonomy" id="482957"/>
    <lineage>
        <taxon>Bacteria</taxon>
        <taxon>Pseudomonadati</taxon>
        <taxon>Pseudomonadota</taxon>
        <taxon>Betaproteobacteria</taxon>
        <taxon>Burkholderiales</taxon>
        <taxon>Burkholderiaceae</taxon>
        <taxon>Burkholderia</taxon>
        <taxon>Burkholderia cepacia complex</taxon>
    </lineage>
</organism>
<sequence>MARITVEDCLKQIPNRFELALAATYRARQLAQGHTPKIESRDKPTVVALREIAAGQVGVEMLKKVPV</sequence>
<comment type="function">
    <text evidence="1">Promotes RNA polymerase assembly. Latches the N- and C-terminal regions of the beta' subunit thereby facilitating its interaction with the beta and alpha subunits.</text>
</comment>
<comment type="catalytic activity">
    <reaction evidence="1">
        <text>RNA(n) + a ribonucleoside 5'-triphosphate = RNA(n+1) + diphosphate</text>
        <dbReference type="Rhea" id="RHEA:21248"/>
        <dbReference type="Rhea" id="RHEA-COMP:14527"/>
        <dbReference type="Rhea" id="RHEA-COMP:17342"/>
        <dbReference type="ChEBI" id="CHEBI:33019"/>
        <dbReference type="ChEBI" id="CHEBI:61557"/>
        <dbReference type="ChEBI" id="CHEBI:140395"/>
        <dbReference type="EC" id="2.7.7.6"/>
    </reaction>
</comment>
<comment type="subunit">
    <text evidence="1">The RNAP catalytic core consists of 2 alpha, 1 beta, 1 beta' and 1 omega subunit. When a sigma factor is associated with the core the holoenzyme is formed, which can initiate transcription.</text>
</comment>
<comment type="similarity">
    <text evidence="1">Belongs to the RNA polymerase subunit omega family.</text>
</comment>